<name>UBIC_SALPA</name>
<protein>
    <recommendedName>
        <fullName evidence="1">Chorismate pyruvate-lyase</fullName>
        <shortName evidence="1">CL</shortName>
        <shortName evidence="1">CPL</shortName>
        <ecNumber evidence="1">4.1.3.40</ecNumber>
    </recommendedName>
</protein>
<feature type="chain" id="PRO_0000240569" description="Chorismate pyruvate-lyase">
    <location>
        <begin position="1"/>
        <end position="165"/>
    </location>
</feature>
<feature type="binding site" evidence="1">
    <location>
        <position position="35"/>
    </location>
    <ligand>
        <name>substrate</name>
    </ligand>
</feature>
<feature type="binding site" evidence="1">
    <location>
        <position position="77"/>
    </location>
    <ligand>
        <name>substrate</name>
    </ligand>
</feature>
<feature type="binding site" evidence="1">
    <location>
        <position position="115"/>
    </location>
    <ligand>
        <name>substrate</name>
    </ligand>
</feature>
<feature type="binding site" evidence="1">
    <location>
        <position position="156"/>
    </location>
    <ligand>
        <name>substrate</name>
    </ligand>
</feature>
<comment type="function">
    <text evidence="1">Removes the pyruvyl group from chorismate, with concomitant aromatization of the ring, to provide 4-hydroxybenzoate (4HB) for the ubiquinone pathway.</text>
</comment>
<comment type="catalytic activity">
    <reaction evidence="1">
        <text>chorismate = 4-hydroxybenzoate + pyruvate</text>
        <dbReference type="Rhea" id="RHEA:16505"/>
        <dbReference type="ChEBI" id="CHEBI:15361"/>
        <dbReference type="ChEBI" id="CHEBI:17879"/>
        <dbReference type="ChEBI" id="CHEBI:29748"/>
        <dbReference type="EC" id="4.1.3.40"/>
    </reaction>
</comment>
<comment type="pathway">
    <text evidence="1">Cofactor biosynthesis; ubiquinone biosynthesis.</text>
</comment>
<comment type="subunit">
    <text evidence="1">Monomer.</text>
</comment>
<comment type="subcellular location">
    <subcellularLocation>
        <location evidence="1">Cytoplasm</location>
    </subcellularLocation>
</comment>
<comment type="similarity">
    <text evidence="1">Belongs to the UbiC family.</text>
</comment>
<proteinExistence type="inferred from homology"/>
<dbReference type="EC" id="4.1.3.40" evidence="1"/>
<dbReference type="EMBL" id="CP000026">
    <property type="protein sequence ID" value="AAV79796.1"/>
    <property type="molecule type" value="Genomic_DNA"/>
</dbReference>
<dbReference type="RefSeq" id="WP_000019219.1">
    <property type="nucleotide sequence ID" value="NC_006511.1"/>
</dbReference>
<dbReference type="SMR" id="Q5PL18"/>
<dbReference type="KEGG" id="spt:SPA4050"/>
<dbReference type="HOGENOM" id="CLU_096824_1_0_6"/>
<dbReference type="UniPathway" id="UPA00232"/>
<dbReference type="Proteomes" id="UP000008185">
    <property type="component" value="Chromosome"/>
</dbReference>
<dbReference type="GO" id="GO:0005829">
    <property type="term" value="C:cytosol"/>
    <property type="evidence" value="ECO:0007669"/>
    <property type="project" value="TreeGrafter"/>
</dbReference>
<dbReference type="GO" id="GO:0008813">
    <property type="term" value="F:chorismate lyase activity"/>
    <property type="evidence" value="ECO:0007669"/>
    <property type="project" value="UniProtKB-UniRule"/>
</dbReference>
<dbReference type="GO" id="GO:0042866">
    <property type="term" value="P:pyruvate biosynthetic process"/>
    <property type="evidence" value="ECO:0007669"/>
    <property type="project" value="UniProtKB-UniRule"/>
</dbReference>
<dbReference type="GO" id="GO:0006744">
    <property type="term" value="P:ubiquinone biosynthetic process"/>
    <property type="evidence" value="ECO:0007669"/>
    <property type="project" value="UniProtKB-UniRule"/>
</dbReference>
<dbReference type="FunFam" id="3.40.1410.10:FF:000002">
    <property type="entry name" value="Chorismate pyruvate-lyase"/>
    <property type="match status" value="1"/>
</dbReference>
<dbReference type="Gene3D" id="3.40.1410.10">
    <property type="entry name" value="Chorismate lyase-like"/>
    <property type="match status" value="1"/>
</dbReference>
<dbReference type="HAMAP" id="MF_01632">
    <property type="entry name" value="UbiC"/>
    <property type="match status" value="1"/>
</dbReference>
<dbReference type="InterPro" id="IPR007440">
    <property type="entry name" value="Chorismate--pyruvate_lyase"/>
</dbReference>
<dbReference type="InterPro" id="IPR028978">
    <property type="entry name" value="Chorismate_lyase_/UTRA_dom_sf"/>
</dbReference>
<dbReference type="NCBIfam" id="NF008656">
    <property type="entry name" value="PRK11655.1"/>
    <property type="match status" value="1"/>
</dbReference>
<dbReference type="PANTHER" id="PTHR38683">
    <property type="entry name" value="CHORISMATE PYRUVATE-LYASE"/>
    <property type="match status" value="1"/>
</dbReference>
<dbReference type="PANTHER" id="PTHR38683:SF1">
    <property type="entry name" value="CHORISMATE PYRUVATE-LYASE"/>
    <property type="match status" value="1"/>
</dbReference>
<dbReference type="Pfam" id="PF04345">
    <property type="entry name" value="Chor_lyase"/>
    <property type="match status" value="1"/>
</dbReference>
<dbReference type="SUPFAM" id="SSF64288">
    <property type="entry name" value="Chorismate lyase-like"/>
    <property type="match status" value="1"/>
</dbReference>
<evidence type="ECO:0000255" key="1">
    <source>
        <dbReference type="HAMAP-Rule" id="MF_01632"/>
    </source>
</evidence>
<organism>
    <name type="scientific">Salmonella paratyphi A (strain ATCC 9150 / SARB42)</name>
    <dbReference type="NCBI Taxonomy" id="295319"/>
    <lineage>
        <taxon>Bacteria</taxon>
        <taxon>Pseudomonadati</taxon>
        <taxon>Pseudomonadota</taxon>
        <taxon>Gammaproteobacteria</taxon>
        <taxon>Enterobacterales</taxon>
        <taxon>Enterobacteriaceae</taxon>
        <taxon>Salmonella</taxon>
    </lineage>
</organism>
<keyword id="KW-0963">Cytoplasm</keyword>
<keyword id="KW-0456">Lyase</keyword>
<keyword id="KW-0670">Pyruvate</keyword>
<keyword id="KW-0831">Ubiquinone biosynthesis</keyword>
<gene>
    <name evidence="1" type="primary">ubiC</name>
    <name type="ordered locus">SPA4050</name>
</gene>
<accession>Q5PL18</accession>
<reference key="1">
    <citation type="journal article" date="2004" name="Nat. Genet.">
        <title>Comparison of genome degradation in Paratyphi A and Typhi, human-restricted serovars of Salmonella enterica that cause typhoid.</title>
        <authorList>
            <person name="McClelland M."/>
            <person name="Sanderson K.E."/>
            <person name="Clifton S.W."/>
            <person name="Latreille P."/>
            <person name="Porwollik S."/>
            <person name="Sabo A."/>
            <person name="Meyer R."/>
            <person name="Bieri T."/>
            <person name="Ozersky P."/>
            <person name="McLellan M."/>
            <person name="Harkins C.R."/>
            <person name="Wang C."/>
            <person name="Nguyen C."/>
            <person name="Berghoff A."/>
            <person name="Elliott G."/>
            <person name="Kohlberg S."/>
            <person name="Strong C."/>
            <person name="Du F."/>
            <person name="Carter J."/>
            <person name="Kremizki C."/>
            <person name="Layman D."/>
            <person name="Leonard S."/>
            <person name="Sun H."/>
            <person name="Fulton L."/>
            <person name="Nash W."/>
            <person name="Miner T."/>
            <person name="Minx P."/>
            <person name="Delehaunty K."/>
            <person name="Fronick C."/>
            <person name="Magrini V."/>
            <person name="Nhan M."/>
            <person name="Warren W."/>
            <person name="Florea L."/>
            <person name="Spieth J."/>
            <person name="Wilson R.K."/>
        </authorList>
    </citation>
    <scope>NUCLEOTIDE SEQUENCE [LARGE SCALE GENOMIC DNA]</scope>
    <source>
        <strain>ATCC 9150 / SARB42</strain>
    </source>
</reference>
<sequence>MSHPALTQLRALRYFDAIPALEPHLLDWLLLEDSMTKRFEQQGKRVSVTLIREAFVGQSEVEEASGLLPSESRYWLREILLCADGEPWLAGRTVVPESTLCGPEQVLQHLGKTPLGRYLFTSSTLTRDFIEIGRDATLWGRRSRLRLSGKPLLLTELFLPASPLY</sequence>